<comment type="function">
    <text evidence="1">GTPase that plays an essential role in the late steps of ribosome biogenesis.</text>
</comment>
<comment type="subunit">
    <text evidence="1">Associates with the 50S ribosomal subunit.</text>
</comment>
<comment type="similarity">
    <text evidence="1">Belongs to the TRAFAC class TrmE-Era-EngA-EngB-Septin-like GTPase superfamily. EngA (Der) GTPase family.</text>
</comment>
<feature type="chain" id="PRO_1000011676" description="GTPase Der">
    <location>
        <begin position="1"/>
        <end position="468"/>
    </location>
</feature>
<feature type="domain" description="EngA-type G 1">
    <location>
        <begin position="3"/>
        <end position="167"/>
    </location>
</feature>
<feature type="domain" description="EngA-type G 2">
    <location>
        <begin position="179"/>
        <end position="352"/>
    </location>
</feature>
<feature type="domain" description="KH-like" evidence="1">
    <location>
        <begin position="353"/>
        <end position="437"/>
    </location>
</feature>
<feature type="region of interest" description="Disordered" evidence="2">
    <location>
        <begin position="434"/>
        <end position="468"/>
    </location>
</feature>
<feature type="compositionally biased region" description="Basic residues" evidence="2">
    <location>
        <begin position="456"/>
        <end position="468"/>
    </location>
</feature>
<feature type="binding site" evidence="1">
    <location>
        <begin position="9"/>
        <end position="16"/>
    </location>
    <ligand>
        <name>GTP</name>
        <dbReference type="ChEBI" id="CHEBI:37565"/>
        <label>1</label>
    </ligand>
</feature>
<feature type="binding site" evidence="1">
    <location>
        <begin position="56"/>
        <end position="60"/>
    </location>
    <ligand>
        <name>GTP</name>
        <dbReference type="ChEBI" id="CHEBI:37565"/>
        <label>1</label>
    </ligand>
</feature>
<feature type="binding site" evidence="1">
    <location>
        <begin position="119"/>
        <end position="122"/>
    </location>
    <ligand>
        <name>GTP</name>
        <dbReference type="ChEBI" id="CHEBI:37565"/>
        <label>1</label>
    </ligand>
</feature>
<feature type="binding site" evidence="1">
    <location>
        <begin position="185"/>
        <end position="192"/>
    </location>
    <ligand>
        <name>GTP</name>
        <dbReference type="ChEBI" id="CHEBI:37565"/>
        <label>2</label>
    </ligand>
</feature>
<feature type="binding site" evidence="1">
    <location>
        <begin position="232"/>
        <end position="236"/>
    </location>
    <ligand>
        <name>GTP</name>
        <dbReference type="ChEBI" id="CHEBI:37565"/>
        <label>2</label>
    </ligand>
</feature>
<feature type="binding site" evidence="1">
    <location>
        <begin position="297"/>
        <end position="300"/>
    </location>
    <ligand>
        <name>GTP</name>
        <dbReference type="ChEBI" id="CHEBI:37565"/>
        <label>2</label>
    </ligand>
</feature>
<keyword id="KW-0342">GTP-binding</keyword>
<keyword id="KW-0547">Nucleotide-binding</keyword>
<keyword id="KW-0677">Repeat</keyword>
<keyword id="KW-0690">Ribosome biogenesis</keyword>
<evidence type="ECO:0000255" key="1">
    <source>
        <dbReference type="HAMAP-Rule" id="MF_00195"/>
    </source>
</evidence>
<evidence type="ECO:0000256" key="2">
    <source>
        <dbReference type="SAM" id="MobiDB-lite"/>
    </source>
</evidence>
<name>DER_NITEC</name>
<sequence length="468" mass="51989">MKPTLVLVGRPNVGKSTLFNRLTRSRDAIVADIPGLTRDRHYGHGRLGLKPYLVVDTGGFEPVVKSGILHAMARQTLQAVDEADVVLFIVDGRQGLASQDKIIADQLRKTGRKIILVVNKAEGMPYSTAAVEFHELGLGTPCVVSALHGEHLGELIDFALEDYPYAEDIEAEPGQEKHPVIAIAGRPNVGKSTLINTLLGEERMIAFDQPGTTRDSIYIDFEYGQRRYTLIDTAGLRRSGKVWETVEKFSVVKTLQSIEAANVVVLVLDAQSGISEQDAHIAGFILETGRALVIAINKWDGMDDYQRDTTKREFERKLAFLNFANLHYISALYGNGVKALMPSVDAAYTAAMAHIPTPKLTRVMLAAVAKQQPPRGGVSRPKLRYAHQGGENPPLIIVHGSMLDHVPQTYRRYLENTFRDVFELKGTPLRVEFRTGHNPYAGKKAPPLTEEEARRAHSRRRRNRKKYG</sequence>
<dbReference type="EMBL" id="CP000450">
    <property type="protein sequence ID" value="ABI60386.1"/>
    <property type="molecule type" value="Genomic_DNA"/>
</dbReference>
<dbReference type="RefSeq" id="WP_011635183.1">
    <property type="nucleotide sequence ID" value="NC_008344.1"/>
</dbReference>
<dbReference type="SMR" id="Q0AE46"/>
<dbReference type="STRING" id="335283.Neut_2164"/>
<dbReference type="KEGG" id="net:Neut_2164"/>
<dbReference type="eggNOG" id="COG1160">
    <property type="taxonomic scope" value="Bacteria"/>
</dbReference>
<dbReference type="HOGENOM" id="CLU_016077_6_2_4"/>
<dbReference type="OrthoDB" id="9805918at2"/>
<dbReference type="Proteomes" id="UP000001966">
    <property type="component" value="Chromosome"/>
</dbReference>
<dbReference type="GO" id="GO:0016887">
    <property type="term" value="F:ATP hydrolysis activity"/>
    <property type="evidence" value="ECO:0007669"/>
    <property type="project" value="InterPro"/>
</dbReference>
<dbReference type="GO" id="GO:0005525">
    <property type="term" value="F:GTP binding"/>
    <property type="evidence" value="ECO:0007669"/>
    <property type="project" value="UniProtKB-UniRule"/>
</dbReference>
<dbReference type="GO" id="GO:0043022">
    <property type="term" value="F:ribosome binding"/>
    <property type="evidence" value="ECO:0007669"/>
    <property type="project" value="TreeGrafter"/>
</dbReference>
<dbReference type="GO" id="GO:0042254">
    <property type="term" value="P:ribosome biogenesis"/>
    <property type="evidence" value="ECO:0007669"/>
    <property type="project" value="UniProtKB-KW"/>
</dbReference>
<dbReference type="CDD" id="cd01894">
    <property type="entry name" value="EngA1"/>
    <property type="match status" value="1"/>
</dbReference>
<dbReference type="CDD" id="cd01895">
    <property type="entry name" value="EngA2"/>
    <property type="match status" value="1"/>
</dbReference>
<dbReference type="FunFam" id="3.30.300.20:FF:000004">
    <property type="entry name" value="GTPase Der"/>
    <property type="match status" value="1"/>
</dbReference>
<dbReference type="FunFam" id="3.40.50.300:FF:000040">
    <property type="entry name" value="GTPase Der"/>
    <property type="match status" value="1"/>
</dbReference>
<dbReference type="FunFam" id="3.40.50.300:FF:000057">
    <property type="entry name" value="GTPase Der"/>
    <property type="match status" value="1"/>
</dbReference>
<dbReference type="Gene3D" id="3.30.300.20">
    <property type="match status" value="1"/>
</dbReference>
<dbReference type="Gene3D" id="3.40.50.300">
    <property type="entry name" value="P-loop containing nucleotide triphosphate hydrolases"/>
    <property type="match status" value="2"/>
</dbReference>
<dbReference type="HAMAP" id="MF_00195">
    <property type="entry name" value="GTPase_Der"/>
    <property type="match status" value="1"/>
</dbReference>
<dbReference type="InterPro" id="IPR003593">
    <property type="entry name" value="AAA+_ATPase"/>
</dbReference>
<dbReference type="InterPro" id="IPR031166">
    <property type="entry name" value="G_ENGA"/>
</dbReference>
<dbReference type="InterPro" id="IPR006073">
    <property type="entry name" value="GTP-bd"/>
</dbReference>
<dbReference type="InterPro" id="IPR016484">
    <property type="entry name" value="GTPase_Der"/>
</dbReference>
<dbReference type="InterPro" id="IPR032859">
    <property type="entry name" value="KH_dom-like"/>
</dbReference>
<dbReference type="InterPro" id="IPR015946">
    <property type="entry name" value="KH_dom-like_a/b"/>
</dbReference>
<dbReference type="InterPro" id="IPR027417">
    <property type="entry name" value="P-loop_NTPase"/>
</dbReference>
<dbReference type="InterPro" id="IPR005225">
    <property type="entry name" value="Small_GTP-bd"/>
</dbReference>
<dbReference type="NCBIfam" id="TIGR03594">
    <property type="entry name" value="GTPase_EngA"/>
    <property type="match status" value="1"/>
</dbReference>
<dbReference type="NCBIfam" id="TIGR00231">
    <property type="entry name" value="small_GTP"/>
    <property type="match status" value="2"/>
</dbReference>
<dbReference type="PANTHER" id="PTHR43834">
    <property type="entry name" value="GTPASE DER"/>
    <property type="match status" value="1"/>
</dbReference>
<dbReference type="PANTHER" id="PTHR43834:SF6">
    <property type="entry name" value="GTPASE DER"/>
    <property type="match status" value="1"/>
</dbReference>
<dbReference type="Pfam" id="PF14714">
    <property type="entry name" value="KH_dom-like"/>
    <property type="match status" value="1"/>
</dbReference>
<dbReference type="Pfam" id="PF01926">
    <property type="entry name" value="MMR_HSR1"/>
    <property type="match status" value="2"/>
</dbReference>
<dbReference type="PIRSF" id="PIRSF006485">
    <property type="entry name" value="GTP-binding_EngA"/>
    <property type="match status" value="1"/>
</dbReference>
<dbReference type="PRINTS" id="PR00326">
    <property type="entry name" value="GTP1OBG"/>
</dbReference>
<dbReference type="SMART" id="SM00382">
    <property type="entry name" value="AAA"/>
    <property type="match status" value="2"/>
</dbReference>
<dbReference type="SUPFAM" id="SSF52540">
    <property type="entry name" value="P-loop containing nucleoside triphosphate hydrolases"/>
    <property type="match status" value="2"/>
</dbReference>
<dbReference type="PROSITE" id="PS51712">
    <property type="entry name" value="G_ENGA"/>
    <property type="match status" value="2"/>
</dbReference>
<reference key="1">
    <citation type="journal article" date="2007" name="Environ. Microbiol.">
        <title>Whole-genome analysis of the ammonia-oxidizing bacterium, Nitrosomonas eutropha C91: implications for niche adaptation.</title>
        <authorList>
            <person name="Stein L.Y."/>
            <person name="Arp D.J."/>
            <person name="Berube P.M."/>
            <person name="Chain P.S."/>
            <person name="Hauser L."/>
            <person name="Jetten M.S."/>
            <person name="Klotz M.G."/>
            <person name="Larimer F.W."/>
            <person name="Norton J.M."/>
            <person name="Op den Camp H.J.M."/>
            <person name="Shin M."/>
            <person name="Wei X."/>
        </authorList>
    </citation>
    <scope>NUCLEOTIDE SEQUENCE [LARGE SCALE GENOMIC DNA]</scope>
    <source>
        <strain>DSM 101675 / C91 / Nm57</strain>
    </source>
</reference>
<gene>
    <name evidence="1" type="primary">der</name>
    <name type="synonym">engA</name>
    <name type="ordered locus">Neut_2164</name>
</gene>
<organism>
    <name type="scientific">Nitrosomonas eutropha (strain DSM 101675 / C91 / Nm57)</name>
    <dbReference type="NCBI Taxonomy" id="335283"/>
    <lineage>
        <taxon>Bacteria</taxon>
        <taxon>Pseudomonadati</taxon>
        <taxon>Pseudomonadota</taxon>
        <taxon>Betaproteobacteria</taxon>
        <taxon>Nitrosomonadales</taxon>
        <taxon>Nitrosomonadaceae</taxon>
        <taxon>Nitrosomonas</taxon>
    </lineage>
</organism>
<proteinExistence type="inferred from homology"/>
<protein>
    <recommendedName>
        <fullName evidence="1">GTPase Der</fullName>
    </recommendedName>
    <alternativeName>
        <fullName evidence="1">GTP-binding protein EngA</fullName>
    </alternativeName>
</protein>
<accession>Q0AE46</accession>